<dbReference type="EMBL" id="AK129243">
    <property type="protein sequence ID" value="BAC98053.1"/>
    <property type="status" value="ALT_INIT"/>
    <property type="molecule type" value="mRNA"/>
</dbReference>
<dbReference type="EMBL" id="AL845164">
    <property type="protein sequence ID" value="CAM19753.1"/>
    <property type="molecule type" value="Genomic_DNA"/>
</dbReference>
<dbReference type="EMBL" id="AL845164">
    <property type="protein sequence ID" value="CAO77853.1"/>
    <property type="status" value="ALT_SEQ"/>
    <property type="molecule type" value="Genomic_DNA"/>
</dbReference>
<dbReference type="EMBL" id="CH466519">
    <property type="protein sequence ID" value="EDL27930.1"/>
    <property type="molecule type" value="Genomic_DNA"/>
</dbReference>
<dbReference type="EMBL" id="BC047433">
    <property type="protein sequence ID" value="AAH47433.1"/>
    <property type="molecule type" value="mRNA"/>
</dbReference>
<dbReference type="EMBL" id="BC100358">
    <property type="protein sequence ID" value="AAI00359.1"/>
    <property type="molecule type" value="mRNA"/>
</dbReference>
<dbReference type="EMBL" id="BC141046">
    <property type="protein sequence ID" value="AAI41047.1"/>
    <property type="molecule type" value="mRNA"/>
</dbReference>
<dbReference type="EMBL" id="BC145233">
    <property type="protein sequence ID" value="AAI45234.1"/>
    <property type="molecule type" value="mRNA"/>
</dbReference>
<dbReference type="CCDS" id="CCDS38202.1">
    <molecule id="Q497V6-1"/>
</dbReference>
<dbReference type="SMR" id="Q497V6"/>
<dbReference type="FunCoup" id="Q497V6">
    <property type="interactions" value="1558"/>
</dbReference>
<dbReference type="STRING" id="10090.ENSMUSP00000043130"/>
<dbReference type="GlyGen" id="Q497V6">
    <property type="glycosylation" value="1 site"/>
</dbReference>
<dbReference type="iPTMnet" id="Q497V6"/>
<dbReference type="PhosphoSitePlus" id="Q497V6"/>
<dbReference type="jPOST" id="Q497V6"/>
<dbReference type="PaxDb" id="10090-ENSMUSP00000043130"/>
<dbReference type="ProteomicsDB" id="273595">
    <molecule id="Q497V6-1"/>
</dbReference>
<dbReference type="ProteomicsDB" id="273596">
    <molecule id="Q497V6-2"/>
</dbReference>
<dbReference type="AGR" id="MGI:2139371"/>
<dbReference type="MGI" id="MGI:2139371">
    <property type="gene designation" value="Bahd1"/>
</dbReference>
<dbReference type="eggNOG" id="KOG1886">
    <property type="taxonomic scope" value="Eukaryota"/>
</dbReference>
<dbReference type="InParanoid" id="Q497V6"/>
<dbReference type="OrthoDB" id="1922186at2759"/>
<dbReference type="PhylomeDB" id="Q497V6"/>
<dbReference type="TreeFam" id="TF350135"/>
<dbReference type="PRO" id="PR:Q497V6"/>
<dbReference type="Proteomes" id="UP000000589">
    <property type="component" value="Unplaced"/>
</dbReference>
<dbReference type="RNAct" id="Q497V6">
    <property type="molecule type" value="protein"/>
</dbReference>
<dbReference type="GO" id="GO:0005677">
    <property type="term" value="C:chromatin silencing complex"/>
    <property type="evidence" value="ECO:0000250"/>
    <property type="project" value="UniProtKB"/>
</dbReference>
<dbReference type="GO" id="GO:0005694">
    <property type="term" value="C:chromosome"/>
    <property type="evidence" value="ECO:0007669"/>
    <property type="project" value="UniProtKB-SubCell"/>
</dbReference>
<dbReference type="GO" id="GO:0003682">
    <property type="term" value="F:chromatin binding"/>
    <property type="evidence" value="ECO:0000250"/>
    <property type="project" value="UniProtKB"/>
</dbReference>
<dbReference type="GO" id="GO:0031507">
    <property type="term" value="P:heterochromatin formation"/>
    <property type="evidence" value="ECO:0000250"/>
    <property type="project" value="UniProtKB"/>
</dbReference>
<dbReference type="GO" id="GO:0045892">
    <property type="term" value="P:negative regulation of DNA-templated transcription"/>
    <property type="evidence" value="ECO:0000250"/>
    <property type="project" value="UniProtKB"/>
</dbReference>
<dbReference type="CDD" id="cd04714">
    <property type="entry name" value="BAH_BAHCC1"/>
    <property type="match status" value="1"/>
</dbReference>
<dbReference type="Gene3D" id="2.30.30.490">
    <property type="match status" value="1"/>
</dbReference>
<dbReference type="InterPro" id="IPR001025">
    <property type="entry name" value="BAH_dom"/>
</dbReference>
<dbReference type="InterPro" id="IPR053032">
    <property type="entry name" value="BAH_domain-containing"/>
</dbReference>
<dbReference type="InterPro" id="IPR043151">
    <property type="entry name" value="BAH_sf"/>
</dbReference>
<dbReference type="PANTHER" id="PTHR46576">
    <property type="entry name" value="BROMO ADJACENT HOMOLOGY DOMAIN-CONTAINING 1 PROTEIN"/>
    <property type="match status" value="1"/>
</dbReference>
<dbReference type="PANTHER" id="PTHR46576:SF1">
    <property type="entry name" value="BROMO ADJACENT HOMOLOGY DOMAIN-CONTAINING 1 PROTEIN"/>
    <property type="match status" value="1"/>
</dbReference>
<dbReference type="Pfam" id="PF01426">
    <property type="entry name" value="BAH"/>
    <property type="match status" value="1"/>
</dbReference>
<dbReference type="SMART" id="SM00439">
    <property type="entry name" value="BAH"/>
    <property type="match status" value="1"/>
</dbReference>
<dbReference type="PROSITE" id="PS51038">
    <property type="entry name" value="BAH"/>
    <property type="match status" value="1"/>
</dbReference>
<organism>
    <name type="scientific">Mus musculus</name>
    <name type="common">Mouse</name>
    <dbReference type="NCBI Taxonomy" id="10090"/>
    <lineage>
        <taxon>Eukaryota</taxon>
        <taxon>Metazoa</taxon>
        <taxon>Chordata</taxon>
        <taxon>Craniata</taxon>
        <taxon>Vertebrata</taxon>
        <taxon>Euteleostomi</taxon>
        <taxon>Mammalia</taxon>
        <taxon>Eutheria</taxon>
        <taxon>Euarchontoglires</taxon>
        <taxon>Glires</taxon>
        <taxon>Rodentia</taxon>
        <taxon>Myomorpha</taxon>
        <taxon>Muroidea</taxon>
        <taxon>Muridae</taxon>
        <taxon>Murinae</taxon>
        <taxon>Mus</taxon>
        <taxon>Mus</taxon>
    </lineage>
</organism>
<accession>Q497V6</accession>
<accession>A2AQV1</accession>
<accession>A6PWW9</accession>
<accession>B2RUB2</accession>
<accession>B7ZNH0</accession>
<accession>Q6ZQ21</accession>
<accession>Q80VH7</accession>
<keyword id="KW-0025">Alternative splicing</keyword>
<keyword id="KW-0156">Chromatin regulator</keyword>
<keyword id="KW-0158">Chromosome</keyword>
<keyword id="KW-0539">Nucleus</keyword>
<keyword id="KW-0597">Phosphoprotein</keyword>
<keyword id="KW-1185">Reference proteome</keyword>
<keyword id="KW-0678">Repressor</keyword>
<keyword id="KW-0804">Transcription</keyword>
<keyword id="KW-0805">Transcription regulation</keyword>
<keyword id="KW-0832">Ubl conjugation</keyword>
<sequence length="772" mass="83871">MTHTRRKSLPMLSSGPTGRGEPLQMEDSNMEQGTEDVEPGMPESPGHLTGRRKNYPLRKRSLVPEKPKACKVLLTRLENVAGPRSADEADELPPDLPKPPSPTSSSEDAGLVQPRKRRLASLNAEALNNLLLEREETSSLAGARRSRGGDPHRSRDRATGSWSFSKKRPRLGDLGEGSRDLSPELAPDEGARRDGDPAPKRLASLNAAAFLKLSQERELPLRPSRAQAEADGRSTEPLAPRILRPKVNGKNCPKARQGAGSGEATGPPNWQEQPDERWPSAPPHGPPTQPSHQAPGKALENPLRPNLPLLMGGQAALKPEPGRPGEESPAPKQELHQPSFPAPQLSPLPMPGNPADYSGPCGGPELTALGSFYLYCGQDGLQCGAYSPCPMLPEGKLSPVAAPNEGLLMAPSSVPSGVPFQHPPWSAPRYCSSEDTGANGYSICGVLPLSLTHIGTTCGGCPYKMPFTAEGCRSLGQLEFPLPEAGHPASPAHPLLGCPVPSVPPAAEPIPHLQTPISEPQTVARACPQSAKPPSGSKSGLRTGSSCRHTVRSKAARRPSHPKQPRAQRPRPRRRRRRRTNGWVPVGAACEKAVYVLDEPEPAIRKSYQAVERHGETIRVRDTVLLKSGPRKTSTPYVAKISALWENPESGELMMSLLWYYRPEHLQGGRSPSMHEPLQNEVFASRHQDQNSVACIEEKCYVLTFAEYCRFCAMAKRRGEGLPSRKTALVPPSADYSTPPHRTVPEDTDPELVFLCRHVYDFRHGRILKNPQ</sequence>
<comment type="function">
    <text evidence="1">Heterochromatin protein that acts as a transcription repressor and has the ability to promote the formation of large heterochromatic domains. May act by recruiting heterochromatin proteins such as CBX5 (HP1 alpha), HDAC5 and MBD1. Represses IGF2 expression by binding to its CpG-rich P3 promoter and recruiting heterochromatin proteins (By similarity).</text>
</comment>
<comment type="subunit">
    <text evidence="1">Interacts with CBX5 (HP1 alpha), HDAC5, MBD1 and SP1.</text>
</comment>
<comment type="subcellular location">
    <subcellularLocation>
        <location>Nucleus</location>
    </subcellularLocation>
    <subcellularLocation>
        <location>Chromosome</location>
    </subcellularLocation>
    <text evidence="1">Localizes to heterochromatin and inactive X chromosome. Colocalizes with histone H3 trimethylated at 'Lys-27' (H3K27me3) (By similarity).</text>
</comment>
<comment type="alternative products">
    <event type="alternative splicing"/>
    <isoform>
        <id>Q497V6-1</id>
        <name>1</name>
        <sequence type="displayed"/>
    </isoform>
    <isoform>
        <id>Q497V6-2</id>
        <name>2</name>
        <sequence type="described" ref="VSP_038527"/>
    </isoform>
</comment>
<comment type="domain">
    <text evidence="1">The BAH domain is required for localization at H3K27me3.</text>
</comment>
<comment type="PTM">
    <text evidence="1">Ubiquitinated in a FBXO11-dependent manner; leading to degradation.</text>
</comment>
<comment type="sequence caution" evidence="5">
    <conflict type="erroneous initiation">
        <sequence resource="EMBL-CDS" id="BAC98053"/>
    </conflict>
</comment>
<comment type="sequence caution" evidence="5">
    <conflict type="erroneous gene model prediction">
        <sequence resource="EMBL-CDS" id="CAO77853"/>
    </conflict>
</comment>
<proteinExistence type="evidence at protein level"/>
<evidence type="ECO:0000250" key="1">
    <source>
        <dbReference type="UniProtKB" id="Q8TBE0"/>
    </source>
</evidence>
<evidence type="ECO:0000255" key="2">
    <source>
        <dbReference type="PROSITE-ProRule" id="PRU00370"/>
    </source>
</evidence>
<evidence type="ECO:0000256" key="3">
    <source>
        <dbReference type="SAM" id="MobiDB-lite"/>
    </source>
</evidence>
<evidence type="ECO:0000303" key="4">
    <source>
    </source>
</evidence>
<evidence type="ECO:0000305" key="5"/>
<evidence type="ECO:0007744" key="6">
    <source>
    </source>
</evidence>
<feature type="chain" id="PRO_0000287919" description="Bromo adjacent homology domain-containing 1 protein">
    <location>
        <begin position="1"/>
        <end position="772"/>
    </location>
</feature>
<feature type="domain" description="BAH" evidence="2">
    <location>
        <begin position="616"/>
        <end position="771"/>
    </location>
</feature>
<feature type="region of interest" description="Disordered" evidence="3">
    <location>
        <begin position="1"/>
        <end position="63"/>
    </location>
</feature>
<feature type="region of interest" description="Disordered" evidence="3">
    <location>
        <begin position="77"/>
        <end position="117"/>
    </location>
</feature>
<feature type="region of interest" description="Disordered" evidence="3">
    <location>
        <begin position="131"/>
        <end position="357"/>
    </location>
</feature>
<feature type="region of interest" description="Disordered" evidence="3">
    <location>
        <begin position="521"/>
        <end position="582"/>
    </location>
</feature>
<feature type="region of interest" description="Disordered" evidence="3">
    <location>
        <begin position="723"/>
        <end position="743"/>
    </location>
</feature>
<feature type="compositionally biased region" description="Basic residues" evidence="3">
    <location>
        <begin position="49"/>
        <end position="61"/>
    </location>
</feature>
<feature type="compositionally biased region" description="Basic and acidic residues" evidence="3">
    <location>
        <begin position="147"/>
        <end position="158"/>
    </location>
</feature>
<feature type="compositionally biased region" description="Basic and acidic residues" evidence="3">
    <location>
        <begin position="170"/>
        <end position="182"/>
    </location>
</feature>
<feature type="compositionally biased region" description="Basic and acidic residues" evidence="3">
    <location>
        <begin position="189"/>
        <end position="199"/>
    </location>
</feature>
<feature type="compositionally biased region" description="Pro residues" evidence="3">
    <location>
        <begin position="280"/>
        <end position="289"/>
    </location>
</feature>
<feature type="compositionally biased region" description="Low complexity" evidence="3">
    <location>
        <begin position="299"/>
        <end position="310"/>
    </location>
</feature>
<feature type="compositionally biased region" description="Pro residues" evidence="3">
    <location>
        <begin position="340"/>
        <end position="352"/>
    </location>
</feature>
<feature type="compositionally biased region" description="Polar residues" evidence="3">
    <location>
        <begin position="536"/>
        <end position="548"/>
    </location>
</feature>
<feature type="compositionally biased region" description="Basic residues" evidence="3">
    <location>
        <begin position="549"/>
        <end position="580"/>
    </location>
</feature>
<feature type="modified residue" description="Phosphoserine" evidence="1">
    <location>
        <position position="8"/>
    </location>
</feature>
<feature type="modified residue" description="Phosphoserine" evidence="1">
    <location>
        <position position="101"/>
    </location>
</feature>
<feature type="modified residue" description="Phosphoserine" evidence="1">
    <location>
        <position position="121"/>
    </location>
</feature>
<feature type="modified residue" description="Phosphoserine" evidence="6">
    <location>
        <position position="182"/>
    </location>
</feature>
<feature type="modified residue" description="Phosphoserine" evidence="1">
    <location>
        <position position="204"/>
    </location>
</feature>
<feature type="modified residue" description="Phosphothreonine" evidence="1">
    <location>
        <position position="580"/>
    </location>
</feature>
<feature type="splice variant" id="VSP_038527" description="In isoform 2." evidence="4">
    <location>
        <begin position="677"/>
        <end position="679"/>
    </location>
</feature>
<feature type="sequence conflict" description="In Ref. 2; CAM19753." evidence="5" ref="2">
    <original>D</original>
    <variation>N</variation>
    <location>
        <position position="275"/>
    </location>
</feature>
<feature type="sequence conflict" description="In Ref. 2; CAM19753." evidence="5" ref="2">
    <original>T</original>
    <variation>A</variation>
    <location>
        <position position="550"/>
    </location>
</feature>
<gene>
    <name type="primary">Bahd1</name>
    <name type="synonym">Gm117</name>
    <name type="synonym">Kiaa0945</name>
</gene>
<name>BAHD1_MOUSE</name>
<protein>
    <recommendedName>
        <fullName>Bromo adjacent homology domain-containing 1 protein</fullName>
        <shortName>BAH domain-containing protein 1</shortName>
    </recommendedName>
</protein>
<reference key="1">
    <citation type="journal article" date="2003" name="DNA Res.">
        <title>Prediction of the coding sequences of mouse homologues of KIAA gene: III. The complete nucleotide sequences of 500 mouse KIAA-homologous cDNAs identified by screening of terminal sequences of cDNA clones randomly sampled from size-fractionated libraries.</title>
        <authorList>
            <person name="Okazaki N."/>
            <person name="Kikuno R."/>
            <person name="Ohara R."/>
            <person name="Inamoto S."/>
            <person name="Koseki H."/>
            <person name="Hiraoka S."/>
            <person name="Saga Y."/>
            <person name="Nagase T."/>
            <person name="Ohara O."/>
            <person name="Koga H."/>
        </authorList>
    </citation>
    <scope>NUCLEOTIDE SEQUENCE [LARGE SCALE MRNA] (ISOFORM 1)</scope>
    <source>
        <tissue>Embryonic tail</tissue>
    </source>
</reference>
<reference key="2">
    <citation type="journal article" date="2009" name="PLoS Biol.">
        <title>Lineage-specific biology revealed by a finished genome assembly of the mouse.</title>
        <authorList>
            <person name="Church D.M."/>
            <person name="Goodstadt L."/>
            <person name="Hillier L.W."/>
            <person name="Zody M.C."/>
            <person name="Goldstein S."/>
            <person name="She X."/>
            <person name="Bult C.J."/>
            <person name="Agarwala R."/>
            <person name="Cherry J.L."/>
            <person name="DiCuccio M."/>
            <person name="Hlavina W."/>
            <person name="Kapustin Y."/>
            <person name="Meric P."/>
            <person name="Maglott D."/>
            <person name="Birtle Z."/>
            <person name="Marques A.C."/>
            <person name="Graves T."/>
            <person name="Zhou S."/>
            <person name="Teague B."/>
            <person name="Potamousis K."/>
            <person name="Churas C."/>
            <person name="Place M."/>
            <person name="Herschleb J."/>
            <person name="Runnheim R."/>
            <person name="Forrest D."/>
            <person name="Amos-Landgraf J."/>
            <person name="Schwartz D.C."/>
            <person name="Cheng Z."/>
            <person name="Lindblad-Toh K."/>
            <person name="Eichler E.E."/>
            <person name="Ponting C.P."/>
        </authorList>
    </citation>
    <scope>NUCLEOTIDE SEQUENCE [LARGE SCALE GENOMIC DNA]</scope>
    <source>
        <strain>C57BL/6J</strain>
    </source>
</reference>
<reference key="3">
    <citation type="submission" date="2005-07" db="EMBL/GenBank/DDBJ databases">
        <authorList>
            <person name="Mural R.J."/>
            <person name="Adams M.D."/>
            <person name="Myers E.W."/>
            <person name="Smith H.O."/>
            <person name="Venter J.C."/>
        </authorList>
    </citation>
    <scope>NUCLEOTIDE SEQUENCE [LARGE SCALE GENOMIC DNA]</scope>
</reference>
<reference key="4">
    <citation type="journal article" date="2004" name="Genome Res.">
        <title>The status, quality, and expansion of the NIH full-length cDNA project: the Mammalian Gene Collection (MGC).</title>
        <authorList>
            <consortium name="The MGC Project Team"/>
        </authorList>
    </citation>
    <scope>NUCLEOTIDE SEQUENCE [LARGE SCALE MRNA] (ISOFORMS 1 AND 2)</scope>
    <source>
        <strain>FVB/N</strain>
        <tissue>Brain</tissue>
        <tissue>Mammary tumor</tissue>
        <tissue>Thyroid</tissue>
    </source>
</reference>
<reference key="5">
    <citation type="journal article" date="2010" name="Cell">
        <title>A tissue-specific atlas of mouse protein phosphorylation and expression.</title>
        <authorList>
            <person name="Huttlin E.L."/>
            <person name="Jedrychowski M.P."/>
            <person name="Elias J.E."/>
            <person name="Goswami T."/>
            <person name="Rad R."/>
            <person name="Beausoleil S.A."/>
            <person name="Villen J."/>
            <person name="Haas W."/>
            <person name="Sowa M.E."/>
            <person name="Gygi S.P."/>
        </authorList>
    </citation>
    <scope>PHOSPHORYLATION [LARGE SCALE ANALYSIS] AT SER-182</scope>
    <scope>IDENTIFICATION BY MASS SPECTROMETRY [LARGE SCALE ANALYSIS]</scope>
    <source>
        <tissue>Lung</tissue>
        <tissue>Spleen</tissue>
        <tissue>Testis</tissue>
    </source>
</reference>